<dbReference type="EMBL" id="AM260479">
    <property type="protein sequence ID" value="CAJ94163.1"/>
    <property type="molecule type" value="Genomic_DNA"/>
</dbReference>
<dbReference type="RefSeq" id="WP_010815033.1">
    <property type="nucleotide sequence ID" value="NZ_CP039287.1"/>
</dbReference>
<dbReference type="SMR" id="Q0K758"/>
<dbReference type="STRING" id="381666.H16_A3088"/>
<dbReference type="KEGG" id="reh:H16_A3088"/>
<dbReference type="eggNOG" id="COG0484">
    <property type="taxonomic scope" value="Bacteria"/>
</dbReference>
<dbReference type="HOGENOM" id="CLU_017633_0_7_4"/>
<dbReference type="OrthoDB" id="9779889at2"/>
<dbReference type="Proteomes" id="UP000008210">
    <property type="component" value="Chromosome 1"/>
</dbReference>
<dbReference type="GO" id="GO:0005737">
    <property type="term" value="C:cytoplasm"/>
    <property type="evidence" value="ECO:0007669"/>
    <property type="project" value="UniProtKB-SubCell"/>
</dbReference>
<dbReference type="GO" id="GO:0005524">
    <property type="term" value="F:ATP binding"/>
    <property type="evidence" value="ECO:0007669"/>
    <property type="project" value="InterPro"/>
</dbReference>
<dbReference type="GO" id="GO:0031072">
    <property type="term" value="F:heat shock protein binding"/>
    <property type="evidence" value="ECO:0007669"/>
    <property type="project" value="InterPro"/>
</dbReference>
<dbReference type="GO" id="GO:0051082">
    <property type="term" value="F:unfolded protein binding"/>
    <property type="evidence" value="ECO:0007669"/>
    <property type="project" value="UniProtKB-UniRule"/>
</dbReference>
<dbReference type="GO" id="GO:0008270">
    <property type="term" value="F:zinc ion binding"/>
    <property type="evidence" value="ECO:0007669"/>
    <property type="project" value="UniProtKB-UniRule"/>
</dbReference>
<dbReference type="GO" id="GO:0051085">
    <property type="term" value="P:chaperone cofactor-dependent protein refolding"/>
    <property type="evidence" value="ECO:0007669"/>
    <property type="project" value="TreeGrafter"/>
</dbReference>
<dbReference type="GO" id="GO:0006260">
    <property type="term" value="P:DNA replication"/>
    <property type="evidence" value="ECO:0007669"/>
    <property type="project" value="UniProtKB-KW"/>
</dbReference>
<dbReference type="GO" id="GO:0042026">
    <property type="term" value="P:protein refolding"/>
    <property type="evidence" value="ECO:0007669"/>
    <property type="project" value="TreeGrafter"/>
</dbReference>
<dbReference type="GO" id="GO:0009408">
    <property type="term" value="P:response to heat"/>
    <property type="evidence" value="ECO:0007669"/>
    <property type="project" value="InterPro"/>
</dbReference>
<dbReference type="CDD" id="cd06257">
    <property type="entry name" value="DnaJ"/>
    <property type="match status" value="1"/>
</dbReference>
<dbReference type="CDD" id="cd10747">
    <property type="entry name" value="DnaJ_C"/>
    <property type="match status" value="1"/>
</dbReference>
<dbReference type="FunFam" id="1.10.287.110:FF:000031">
    <property type="entry name" value="Molecular chaperone DnaJ"/>
    <property type="match status" value="1"/>
</dbReference>
<dbReference type="FunFam" id="2.10.230.10:FF:000002">
    <property type="entry name" value="Molecular chaperone DnaJ"/>
    <property type="match status" value="1"/>
</dbReference>
<dbReference type="FunFam" id="2.60.260.20:FF:000004">
    <property type="entry name" value="Molecular chaperone DnaJ"/>
    <property type="match status" value="1"/>
</dbReference>
<dbReference type="Gene3D" id="1.10.287.110">
    <property type="entry name" value="DnaJ domain"/>
    <property type="match status" value="1"/>
</dbReference>
<dbReference type="Gene3D" id="2.10.230.10">
    <property type="entry name" value="Heat shock protein DnaJ, cysteine-rich domain"/>
    <property type="match status" value="1"/>
</dbReference>
<dbReference type="Gene3D" id="2.60.260.20">
    <property type="entry name" value="Urease metallochaperone UreE, N-terminal domain"/>
    <property type="match status" value="2"/>
</dbReference>
<dbReference type="HAMAP" id="MF_01152">
    <property type="entry name" value="DnaJ"/>
    <property type="match status" value="1"/>
</dbReference>
<dbReference type="InterPro" id="IPR012724">
    <property type="entry name" value="DnaJ"/>
</dbReference>
<dbReference type="InterPro" id="IPR002939">
    <property type="entry name" value="DnaJ_C"/>
</dbReference>
<dbReference type="InterPro" id="IPR001623">
    <property type="entry name" value="DnaJ_domain"/>
</dbReference>
<dbReference type="InterPro" id="IPR018253">
    <property type="entry name" value="DnaJ_domain_CS"/>
</dbReference>
<dbReference type="InterPro" id="IPR008971">
    <property type="entry name" value="HSP40/DnaJ_pept-bd"/>
</dbReference>
<dbReference type="InterPro" id="IPR001305">
    <property type="entry name" value="HSP_DnaJ_Cys-rich_dom"/>
</dbReference>
<dbReference type="InterPro" id="IPR036410">
    <property type="entry name" value="HSP_DnaJ_Cys-rich_dom_sf"/>
</dbReference>
<dbReference type="InterPro" id="IPR036869">
    <property type="entry name" value="J_dom_sf"/>
</dbReference>
<dbReference type="NCBIfam" id="TIGR02349">
    <property type="entry name" value="DnaJ_bact"/>
    <property type="match status" value="1"/>
</dbReference>
<dbReference type="NCBIfam" id="NF008035">
    <property type="entry name" value="PRK10767.1"/>
    <property type="match status" value="1"/>
</dbReference>
<dbReference type="PANTHER" id="PTHR43096:SF48">
    <property type="entry name" value="CHAPERONE PROTEIN DNAJ"/>
    <property type="match status" value="1"/>
</dbReference>
<dbReference type="PANTHER" id="PTHR43096">
    <property type="entry name" value="DNAJ HOMOLOG 1, MITOCHONDRIAL-RELATED"/>
    <property type="match status" value="1"/>
</dbReference>
<dbReference type="Pfam" id="PF00226">
    <property type="entry name" value="DnaJ"/>
    <property type="match status" value="1"/>
</dbReference>
<dbReference type="Pfam" id="PF01556">
    <property type="entry name" value="DnaJ_C"/>
    <property type="match status" value="1"/>
</dbReference>
<dbReference type="Pfam" id="PF00684">
    <property type="entry name" value="DnaJ_CXXCXGXG"/>
    <property type="match status" value="1"/>
</dbReference>
<dbReference type="PRINTS" id="PR00625">
    <property type="entry name" value="JDOMAIN"/>
</dbReference>
<dbReference type="SMART" id="SM00271">
    <property type="entry name" value="DnaJ"/>
    <property type="match status" value="1"/>
</dbReference>
<dbReference type="SUPFAM" id="SSF46565">
    <property type="entry name" value="Chaperone J-domain"/>
    <property type="match status" value="1"/>
</dbReference>
<dbReference type="SUPFAM" id="SSF57938">
    <property type="entry name" value="DnaJ/Hsp40 cysteine-rich domain"/>
    <property type="match status" value="1"/>
</dbReference>
<dbReference type="SUPFAM" id="SSF49493">
    <property type="entry name" value="HSP40/DnaJ peptide-binding domain"/>
    <property type="match status" value="2"/>
</dbReference>
<dbReference type="PROSITE" id="PS00636">
    <property type="entry name" value="DNAJ_1"/>
    <property type="match status" value="1"/>
</dbReference>
<dbReference type="PROSITE" id="PS50076">
    <property type="entry name" value="DNAJ_2"/>
    <property type="match status" value="1"/>
</dbReference>
<dbReference type="PROSITE" id="PS51188">
    <property type="entry name" value="ZF_CR"/>
    <property type="match status" value="1"/>
</dbReference>
<evidence type="ECO:0000255" key="1">
    <source>
        <dbReference type="HAMAP-Rule" id="MF_01152"/>
    </source>
</evidence>
<evidence type="ECO:0000256" key="2">
    <source>
        <dbReference type="SAM" id="MobiDB-lite"/>
    </source>
</evidence>
<reference key="1">
    <citation type="journal article" date="2006" name="Nat. Biotechnol.">
        <title>Genome sequence of the bioplastic-producing 'Knallgas' bacterium Ralstonia eutropha H16.</title>
        <authorList>
            <person name="Pohlmann A."/>
            <person name="Fricke W.F."/>
            <person name="Reinecke F."/>
            <person name="Kusian B."/>
            <person name="Liesegang H."/>
            <person name="Cramm R."/>
            <person name="Eitinger T."/>
            <person name="Ewering C."/>
            <person name="Poetter M."/>
            <person name="Schwartz E."/>
            <person name="Strittmatter A."/>
            <person name="Voss I."/>
            <person name="Gottschalk G."/>
            <person name="Steinbuechel A."/>
            <person name="Friedrich B."/>
            <person name="Bowien B."/>
        </authorList>
    </citation>
    <scope>NUCLEOTIDE SEQUENCE [LARGE SCALE GENOMIC DNA]</scope>
    <source>
        <strain>ATCC 17699 / DSM 428 / KCTC 22496 / NCIMB 10442 / H16 / Stanier 337</strain>
    </source>
</reference>
<gene>
    <name evidence="1" type="primary">dnaJ</name>
    <name type="ordered locus">H16_A3088</name>
</gene>
<name>DNAJ_CUPNH</name>
<keyword id="KW-0143">Chaperone</keyword>
<keyword id="KW-0963">Cytoplasm</keyword>
<keyword id="KW-0235">DNA replication</keyword>
<keyword id="KW-0479">Metal-binding</keyword>
<keyword id="KW-1185">Reference proteome</keyword>
<keyword id="KW-0677">Repeat</keyword>
<keyword id="KW-0346">Stress response</keyword>
<keyword id="KW-0862">Zinc</keyword>
<keyword id="KW-0863">Zinc-finger</keyword>
<sequence>MAKRDYYEVLGVGKNASDDEIKKAYRKLAMKYHPDRNPEGKDGKIAEEKFKEVKEAYEMLSDPEKKAAYDQYGHAGVDPNMAGGFGGAQGYGGFAEAFGDIFGDIFGQQAGGRRGGGGPQAYRGADLRYSMEISLEQAAHGHEAQIRVPHWDDCDHCHGNGAEPGSSVETCPTCHGAGQVRVSQGFFTMQQTCPKCHGSGKYIPKPCTKCHGQGKLKSQKTLEVKIPAGIDEGMRIRSSGNGEPGINGGPPGDLYVEVHIKAHPMFERDGDDLHCQMPISFATAALGGDLEVPTLSGKATFPVPEATQSGKTFRLRGKGIKGVRSGYPGDLYVHVNVETPVKLTEAQKEMLRQFDRSVHEGGSRHSPQEQSWLDKVKSFFS</sequence>
<feature type="chain" id="PRO_1000085261" description="Chaperone protein DnaJ">
    <location>
        <begin position="1"/>
        <end position="381"/>
    </location>
</feature>
<feature type="domain" description="J" evidence="1">
    <location>
        <begin position="5"/>
        <end position="73"/>
    </location>
</feature>
<feature type="repeat" description="CXXCXGXG motif">
    <location>
        <begin position="154"/>
        <end position="161"/>
    </location>
</feature>
<feature type="repeat" description="CXXCXGXG motif">
    <location>
        <begin position="171"/>
        <end position="178"/>
    </location>
</feature>
<feature type="repeat" description="CXXCXGXG motif">
    <location>
        <begin position="193"/>
        <end position="200"/>
    </location>
</feature>
<feature type="repeat" description="CXXCXGXG motif">
    <location>
        <begin position="207"/>
        <end position="214"/>
    </location>
</feature>
<feature type="zinc finger region" description="CR-type" evidence="1">
    <location>
        <begin position="141"/>
        <end position="219"/>
    </location>
</feature>
<feature type="region of interest" description="Disordered" evidence="2">
    <location>
        <begin position="357"/>
        <end position="381"/>
    </location>
</feature>
<feature type="binding site" evidence="1">
    <location>
        <position position="154"/>
    </location>
    <ligand>
        <name>Zn(2+)</name>
        <dbReference type="ChEBI" id="CHEBI:29105"/>
        <label>1</label>
    </ligand>
</feature>
<feature type="binding site" evidence="1">
    <location>
        <position position="157"/>
    </location>
    <ligand>
        <name>Zn(2+)</name>
        <dbReference type="ChEBI" id="CHEBI:29105"/>
        <label>1</label>
    </ligand>
</feature>
<feature type="binding site" evidence="1">
    <location>
        <position position="171"/>
    </location>
    <ligand>
        <name>Zn(2+)</name>
        <dbReference type="ChEBI" id="CHEBI:29105"/>
        <label>2</label>
    </ligand>
</feature>
<feature type="binding site" evidence="1">
    <location>
        <position position="174"/>
    </location>
    <ligand>
        <name>Zn(2+)</name>
        <dbReference type="ChEBI" id="CHEBI:29105"/>
        <label>2</label>
    </ligand>
</feature>
<feature type="binding site" evidence="1">
    <location>
        <position position="193"/>
    </location>
    <ligand>
        <name>Zn(2+)</name>
        <dbReference type="ChEBI" id="CHEBI:29105"/>
        <label>2</label>
    </ligand>
</feature>
<feature type="binding site" evidence="1">
    <location>
        <position position="196"/>
    </location>
    <ligand>
        <name>Zn(2+)</name>
        <dbReference type="ChEBI" id="CHEBI:29105"/>
        <label>2</label>
    </ligand>
</feature>
<feature type="binding site" evidence="1">
    <location>
        <position position="207"/>
    </location>
    <ligand>
        <name>Zn(2+)</name>
        <dbReference type="ChEBI" id="CHEBI:29105"/>
        <label>1</label>
    </ligand>
</feature>
<feature type="binding site" evidence="1">
    <location>
        <position position="210"/>
    </location>
    <ligand>
        <name>Zn(2+)</name>
        <dbReference type="ChEBI" id="CHEBI:29105"/>
        <label>1</label>
    </ligand>
</feature>
<comment type="function">
    <text evidence="1">Participates actively in the response to hyperosmotic and heat shock by preventing the aggregation of stress-denatured proteins and by disaggregating proteins, also in an autonomous, DnaK-independent fashion. Unfolded proteins bind initially to DnaJ; upon interaction with the DnaJ-bound protein, DnaK hydrolyzes its bound ATP, resulting in the formation of a stable complex. GrpE releases ADP from DnaK; ATP binding to DnaK triggers the release of the substrate protein, thus completing the reaction cycle. Several rounds of ATP-dependent interactions between DnaJ, DnaK and GrpE are required for fully efficient folding. Also involved, together with DnaK and GrpE, in the DNA replication of plasmids through activation of initiation proteins.</text>
</comment>
<comment type="cofactor">
    <cofactor evidence="1">
        <name>Zn(2+)</name>
        <dbReference type="ChEBI" id="CHEBI:29105"/>
    </cofactor>
    <text evidence="1">Binds 2 Zn(2+) ions per monomer.</text>
</comment>
<comment type="subunit">
    <text evidence="1">Homodimer.</text>
</comment>
<comment type="subcellular location">
    <subcellularLocation>
        <location evidence="1">Cytoplasm</location>
    </subcellularLocation>
</comment>
<comment type="domain">
    <text evidence="1">The J domain is necessary and sufficient to stimulate DnaK ATPase activity. Zinc center 1 plays an important role in the autonomous, DnaK-independent chaperone activity of DnaJ. Zinc center 2 is essential for interaction with DnaK and for DnaJ activity.</text>
</comment>
<comment type="similarity">
    <text evidence="1">Belongs to the DnaJ family.</text>
</comment>
<protein>
    <recommendedName>
        <fullName evidence="1">Chaperone protein DnaJ</fullName>
    </recommendedName>
</protein>
<accession>Q0K758</accession>
<proteinExistence type="inferred from homology"/>
<organism>
    <name type="scientific">Cupriavidus necator (strain ATCC 17699 / DSM 428 / KCTC 22496 / NCIMB 10442 / H16 / Stanier 337)</name>
    <name type="common">Ralstonia eutropha</name>
    <dbReference type="NCBI Taxonomy" id="381666"/>
    <lineage>
        <taxon>Bacteria</taxon>
        <taxon>Pseudomonadati</taxon>
        <taxon>Pseudomonadota</taxon>
        <taxon>Betaproteobacteria</taxon>
        <taxon>Burkholderiales</taxon>
        <taxon>Burkholderiaceae</taxon>
        <taxon>Cupriavidus</taxon>
    </lineage>
</organism>